<sequence length="205" mass="23402">MGNCFRRLSLFGQPTQAKYEMLCSSDDLETEELTFFLDMTYKDFGVYQNDIISHQKDTETMKTLLGLLPMYKKTKLRHTVMERCLSNCPNHVKDALCVELMKAEKILQTMDVVFMKTLIGEFSMCTENLNQLLNKFATDQSTLSDVEKINSLIEIDGENSKRLLVELDPILHEETGLYQALPNVVTEAPSEKVKSIRVESEGESV</sequence>
<dbReference type="EMBL" id="X83413">
    <property type="protein sequence ID" value="CAA58378.2"/>
    <property type="molecule type" value="Genomic_DNA"/>
</dbReference>
<dbReference type="EMBL" id="X92436">
    <property type="protein sequence ID" value="CAA63170.1"/>
    <property type="status" value="ALT_INIT"/>
    <property type="molecule type" value="Genomic_DNA"/>
</dbReference>
<dbReference type="RefSeq" id="NP_042937.2">
    <property type="nucleotide sequence ID" value="NC_001664.2"/>
</dbReference>
<dbReference type="DNASU" id="1487922"/>
<dbReference type="GeneID" id="1487922"/>
<dbReference type="KEGG" id="vg:1487922"/>
<dbReference type="Proteomes" id="UP000009295">
    <property type="component" value="Segment"/>
</dbReference>
<dbReference type="GO" id="GO:0044177">
    <property type="term" value="C:host cell Golgi apparatus"/>
    <property type="evidence" value="ECO:0007669"/>
    <property type="project" value="UniProtKB-SubCell"/>
</dbReference>
<dbReference type="GO" id="GO:0019033">
    <property type="term" value="C:viral tegument"/>
    <property type="evidence" value="ECO:0007669"/>
    <property type="project" value="UniProtKB-SubCell"/>
</dbReference>
<dbReference type="InterPro" id="IPR007619">
    <property type="entry name" value="Herpes_U44"/>
</dbReference>
<dbReference type="Pfam" id="PF04533">
    <property type="entry name" value="Herpes_U44"/>
    <property type="match status" value="1"/>
</dbReference>
<organismHost>
    <name type="scientific">Homo sapiens</name>
    <name type="common">Human</name>
    <dbReference type="NCBI Taxonomy" id="9606"/>
</organismHost>
<keyword id="KW-1035">Host cytoplasm</keyword>
<keyword id="KW-1040">Host Golgi apparatus</keyword>
<keyword id="KW-0449">Lipoprotein</keyword>
<keyword id="KW-0564">Palmitate</keyword>
<keyword id="KW-0597">Phosphoprotein</keyword>
<keyword id="KW-1185">Reference proteome</keyword>
<keyword id="KW-0946">Virion</keyword>
<keyword id="KW-0920">Virion tegument</keyword>
<proteinExistence type="inferred from homology"/>
<accession>P52473</accession>
<feature type="chain" id="PRO_0000116209" description="Tegument protein UL51 homolog">
    <location>
        <begin position="1"/>
        <end position="205"/>
    </location>
</feature>
<feature type="lipid moiety-binding region" description="S-palmitoyl cysteine; by host" evidence="1">
    <location>
        <position position="4"/>
    </location>
</feature>
<gene>
    <name type="primary">U44</name>
</gene>
<evidence type="ECO:0000250" key="1">
    <source>
        <dbReference type="UniProtKB" id="P10235"/>
    </source>
</evidence>
<evidence type="ECO:0000250" key="2">
    <source>
        <dbReference type="UniProtKB" id="P16823"/>
    </source>
</evidence>
<evidence type="ECO:0000305" key="3"/>
<comment type="function">
    <text evidence="1">Plays several roles during the time course of infection, including egress of virus particles from the perinuclear space and secondary envelopment of cytoplasmic capsids that bud into specific trans-Golgi network (TGN)-derived membranes.</text>
</comment>
<comment type="subunit">
    <text evidence="1 2">Oligomerizes. Interacts with U75; this interaction mediates U75 incorporation to virions.</text>
</comment>
<comment type="subcellular location">
    <subcellularLocation>
        <location evidence="1">Virion tegument</location>
    </subcellularLocation>
    <subcellularLocation>
        <location evidence="1">Host cytoplasm</location>
    </subcellularLocation>
    <subcellularLocation>
        <location evidence="1">Host Golgi apparatus</location>
    </subcellularLocation>
</comment>
<comment type="PTM">
    <text evidence="1">Phosphorylated.</text>
</comment>
<comment type="PTM">
    <text evidence="1">Palmitoylation is necessary for Golgi localization.</text>
</comment>
<comment type="similarity">
    <text evidence="3">Belongs to the herpesviridae UL51 family.</text>
</comment>
<comment type="sequence caution" evidence="3">
    <conflict type="erroneous initiation">
        <sequence resource="EMBL-CDS" id="CAA63170"/>
    </conflict>
    <text>Extended N-terminus.</text>
</comment>
<organism>
    <name type="scientific">Human herpesvirus 6A (strain Uganda-1102)</name>
    <name type="common">HHV-6 variant A</name>
    <name type="synonym">Human B lymphotropic virus</name>
    <dbReference type="NCBI Taxonomy" id="10370"/>
    <lineage>
        <taxon>Viruses</taxon>
        <taxon>Duplodnaviria</taxon>
        <taxon>Heunggongvirae</taxon>
        <taxon>Peploviricota</taxon>
        <taxon>Herviviricetes</taxon>
        <taxon>Herpesvirales</taxon>
        <taxon>Orthoherpesviridae</taxon>
        <taxon>Betaherpesvirinae</taxon>
        <taxon>Roseolovirus</taxon>
        <taxon>Roseolovirus humanbeta6a</taxon>
        <taxon>Human betaherpesvirus 6A</taxon>
    </lineage>
</organism>
<name>TEG7_HHV6U</name>
<protein>
    <recommendedName>
        <fullName>Tegument protein UL51 homolog</fullName>
    </recommendedName>
</protein>
<reference key="1">
    <citation type="journal article" date="1995" name="Virology">
        <title>The DNA sequence of human herpesvirus-6: structure, coding content, and genome evolution.</title>
        <authorList>
            <person name="Gompels U.A."/>
            <person name="Nicholas J."/>
            <person name="Lawrence G.L."/>
            <person name="Jones M."/>
            <person name="Thomson B.J."/>
            <person name="Martin M.E.D."/>
            <person name="Efstathiou S."/>
            <person name="Craxton M.A."/>
            <person name="Macaulay H.A."/>
        </authorList>
    </citation>
    <scope>NUCLEOTIDE SEQUENCE [LARGE SCALE GENOMIC DNA]</scope>
</reference>
<reference key="2">
    <citation type="submission" date="1995-10" db="EMBL/GenBank/DDBJ databases">
        <authorList>
            <person name="Jones M.D."/>
        </authorList>
    </citation>
    <scope>NUCLEOTIDE SEQUENCE [GENOMIC DNA]</scope>
</reference>